<name>Y963_STAAB</name>
<dbReference type="EMBL" id="AJ938182">
    <property type="protein sequence ID" value="CAI80651.1"/>
    <property type="molecule type" value="Genomic_DNA"/>
</dbReference>
<dbReference type="RefSeq" id="WP_000455595.1">
    <property type="nucleotide sequence ID" value="NC_007622.1"/>
</dbReference>
<dbReference type="SMR" id="Q2YX76"/>
<dbReference type="KEGG" id="sab:SAB0963"/>
<dbReference type="HOGENOM" id="CLU_166693_0_0_9"/>
<dbReference type="Gene3D" id="1.10.220.80">
    <property type="entry name" value="BH2638-like"/>
    <property type="match status" value="1"/>
</dbReference>
<dbReference type="HAMAP" id="MF_01041">
    <property type="entry name" value="UPF0223"/>
    <property type="match status" value="1"/>
</dbReference>
<dbReference type="InterPro" id="IPR023324">
    <property type="entry name" value="BH2638-like_sf"/>
</dbReference>
<dbReference type="InterPro" id="IPR007920">
    <property type="entry name" value="UPF0223"/>
</dbReference>
<dbReference type="NCBIfam" id="NF003353">
    <property type="entry name" value="PRK04387.1"/>
    <property type="match status" value="1"/>
</dbReference>
<dbReference type="Pfam" id="PF05256">
    <property type="entry name" value="UPF0223"/>
    <property type="match status" value="1"/>
</dbReference>
<dbReference type="PIRSF" id="PIRSF037260">
    <property type="entry name" value="UPF0223"/>
    <property type="match status" value="1"/>
</dbReference>
<dbReference type="SUPFAM" id="SSF158504">
    <property type="entry name" value="BH2638-like"/>
    <property type="match status" value="1"/>
</dbReference>
<gene>
    <name type="ordered locus">SAB0963</name>
</gene>
<organism>
    <name type="scientific">Staphylococcus aureus (strain bovine RF122 / ET3-1)</name>
    <dbReference type="NCBI Taxonomy" id="273036"/>
    <lineage>
        <taxon>Bacteria</taxon>
        <taxon>Bacillati</taxon>
        <taxon>Bacillota</taxon>
        <taxon>Bacilli</taxon>
        <taxon>Bacillales</taxon>
        <taxon>Staphylococcaceae</taxon>
        <taxon>Staphylococcus</taxon>
    </lineage>
</organism>
<accession>Q2YX76</accession>
<feature type="chain" id="PRO_1000064147" description="UPF0223 protein SAB0963">
    <location>
        <begin position="1"/>
        <end position="91"/>
    </location>
</feature>
<protein>
    <recommendedName>
        <fullName evidence="1">UPF0223 protein SAB0963</fullName>
    </recommendedName>
</protein>
<comment type="similarity">
    <text evidence="1">Belongs to the UPF0223 family.</text>
</comment>
<sequence length="91" mass="10719">MEYEYPIDLDWSNEEMISVINFFNHVEKYYESGVTAGDFMGAYKRFKEIVPAKAEEKQIFNTFEKSSGYNSYKAVQDVKTHSEEQRVKAKK</sequence>
<evidence type="ECO:0000255" key="1">
    <source>
        <dbReference type="HAMAP-Rule" id="MF_01041"/>
    </source>
</evidence>
<reference key="1">
    <citation type="journal article" date="2007" name="PLoS ONE">
        <title>Molecular correlates of host specialization in Staphylococcus aureus.</title>
        <authorList>
            <person name="Herron-Olson L."/>
            <person name="Fitzgerald J.R."/>
            <person name="Musser J.M."/>
            <person name="Kapur V."/>
        </authorList>
    </citation>
    <scope>NUCLEOTIDE SEQUENCE [LARGE SCALE GENOMIC DNA]</scope>
    <source>
        <strain>bovine RF122 / ET3-1</strain>
    </source>
</reference>
<proteinExistence type="inferred from homology"/>